<comment type="function">
    <text evidence="1">Component of the MICOS complex, a large protein complex of the mitochondrial inner membrane that plays crucial roles in the maintenance of crista junctions, inner membrane architecture, and formation of contact sites to the outer membrane. Plays a role in keeping cristae membranes connected to the inner boundary membrane. Also promotes protein import via the mitochondrial intermembrane space assembly (MIA) pathway (By similarity).</text>
</comment>
<comment type="subunit">
    <text evidence="1">Component of the mitochondrial contact site and cristae organizing system (MICOS) complex.</text>
</comment>
<comment type="subcellular location">
    <subcellularLocation>
        <location evidence="1">Mitochondrion inner membrane</location>
        <topology evidence="1">Single-pass membrane protein</topology>
    </subcellularLocation>
</comment>
<comment type="similarity">
    <text evidence="4">Belongs to the MICOS complex subunit Mic60 family.</text>
</comment>
<protein>
    <recommendedName>
        <fullName>MICOS complex subunit MIC60</fullName>
    </recommendedName>
    <alternativeName>
        <fullName>Mitofilin</fullName>
    </alternativeName>
</protein>
<gene>
    <name type="primary">MIC60</name>
    <name type="ORF">PADG_03039</name>
</gene>
<accession>C1G784</accession>
<sequence>MLRTSIATSRQLLSSPVCPKASAQWLRSSNAGRANTTTRRYYAIQQEPNGALRSSLSPSAAAVSDVSQRASNSTNTKRPNTSDLNVRSPASPSTGSTLKPETVLVAPVSPLRQGQSSPGSAAPAPEPAAAPPPSPPPPPPAPKTGRLRKFLLYLFLTTGLAYAGGVWYSLRSDNFYDFFTEYAPYGENAVIYLEERDFRNRFPNATKKNNRRAVAPRDEGAQVTIPGGSGLSWKVAEEQQEGSDISKKGPHMSAVDNNKATKDTKTVEKTKGGVTSKSPAQKEEAVKTKPAPEGVKTQPAKVAETPREPAIPAITTIDHLVLNTEDEPVVQDLVKVFNDIITVISADAPSSFSGPVAKAKEELEKIGKRILALKSDAQASAQKEINDAHASFDKSAANLIRHIDEMRAEDATKFREEFEAERERIAQSYQEKINTELQRAHEVAEQRLRNELVEQAIELNRKFLSDVKNLVEHERESRLSKLAELVSSVAELERLTAGWSNVIDINLKTQQLQVAVDAVRTTLENSNVPRPFIRELAAVKELASNDEVVSAAIDSISPVAYQRGIPSSAHLVDRFRRVATEVRKASLLPENAGITSHAASFVLNKVMLKKHGSPAGNDVESTLTRAENFLEEGNLDEAAREMNSLKGWAKLLSKDWLADVRRVLEVKQALEVIETEARLRCLQVE</sequence>
<keyword id="KW-0175">Coiled coil</keyword>
<keyword id="KW-0472">Membrane</keyword>
<keyword id="KW-0496">Mitochondrion</keyword>
<keyword id="KW-0999">Mitochondrion inner membrane</keyword>
<keyword id="KW-1185">Reference proteome</keyword>
<keyword id="KW-0809">Transit peptide</keyword>
<keyword id="KW-0812">Transmembrane</keyword>
<keyword id="KW-1133">Transmembrane helix</keyword>
<organism>
    <name type="scientific">Paracoccidioides brasiliensis (strain Pb18)</name>
    <dbReference type="NCBI Taxonomy" id="502780"/>
    <lineage>
        <taxon>Eukaryota</taxon>
        <taxon>Fungi</taxon>
        <taxon>Dikarya</taxon>
        <taxon>Ascomycota</taxon>
        <taxon>Pezizomycotina</taxon>
        <taxon>Eurotiomycetes</taxon>
        <taxon>Eurotiomycetidae</taxon>
        <taxon>Onygenales</taxon>
        <taxon>Ajellomycetaceae</taxon>
        <taxon>Paracoccidioides</taxon>
    </lineage>
</organism>
<reference key="1">
    <citation type="journal article" date="2011" name="PLoS Genet.">
        <title>Comparative genomic analysis of human fungal pathogens causing paracoccidioidomycosis.</title>
        <authorList>
            <person name="Desjardins C.A."/>
            <person name="Champion M.D."/>
            <person name="Holder J.W."/>
            <person name="Muszewska A."/>
            <person name="Goldberg J."/>
            <person name="Bailao A.M."/>
            <person name="Brigido M.M."/>
            <person name="Ferreira M.E."/>
            <person name="Garcia A.M."/>
            <person name="Grynberg M."/>
            <person name="Gujja S."/>
            <person name="Heiman D.I."/>
            <person name="Henn M.R."/>
            <person name="Kodira C.D."/>
            <person name="Leon-Narvaez H."/>
            <person name="Longo L.V.G."/>
            <person name="Ma L.-J."/>
            <person name="Malavazi I."/>
            <person name="Matsuo A.L."/>
            <person name="Morais F.V."/>
            <person name="Pereira M."/>
            <person name="Rodriguez-Brito S."/>
            <person name="Sakthikumar S."/>
            <person name="Salem-Izacc S.M."/>
            <person name="Sykes S.M."/>
            <person name="Teixeira M.M."/>
            <person name="Vallejo M.C."/>
            <person name="Walter M.E."/>
            <person name="Yandava C."/>
            <person name="Young S."/>
            <person name="Zeng Q."/>
            <person name="Zucker J."/>
            <person name="Felipe M.S."/>
            <person name="Goldman G.H."/>
            <person name="Haas B.J."/>
            <person name="McEwen J.G."/>
            <person name="Nino-Vega G."/>
            <person name="Puccia R."/>
            <person name="San-Blas G."/>
            <person name="Soares C.M."/>
            <person name="Birren B.W."/>
            <person name="Cuomo C.A."/>
        </authorList>
    </citation>
    <scope>NUCLEOTIDE SEQUENCE [LARGE SCALE GENOMIC DNA]</scope>
    <source>
        <strain>Pb18</strain>
    </source>
</reference>
<feature type="transit peptide" description="Mitochondrion" evidence="2">
    <location>
        <begin position="1"/>
        <end position="19"/>
    </location>
</feature>
<feature type="chain" id="PRO_0000406664" description="MICOS complex subunit MIC60">
    <location>
        <begin position="20"/>
        <end position="685"/>
    </location>
</feature>
<feature type="topological domain" description="Mitochondrial matrix" evidence="2">
    <location>
        <begin position="20"/>
        <end position="149"/>
    </location>
</feature>
<feature type="transmembrane region" description="Helical" evidence="2">
    <location>
        <begin position="150"/>
        <end position="169"/>
    </location>
</feature>
<feature type="topological domain" description="Mitochondrial intermembrane" evidence="2">
    <location>
        <begin position="170"/>
        <end position="685"/>
    </location>
</feature>
<feature type="region of interest" description="Disordered" evidence="3">
    <location>
        <begin position="49"/>
        <end position="144"/>
    </location>
</feature>
<feature type="region of interest" description="Disordered" evidence="3">
    <location>
        <begin position="209"/>
        <end position="305"/>
    </location>
</feature>
<feature type="coiled-coil region" evidence="2">
    <location>
        <begin position="356"/>
        <end position="379"/>
    </location>
</feature>
<feature type="coiled-coil region" evidence="2">
    <location>
        <begin position="405"/>
        <end position="456"/>
    </location>
</feature>
<feature type="compositionally biased region" description="Low complexity" evidence="3">
    <location>
        <begin position="51"/>
        <end position="67"/>
    </location>
</feature>
<feature type="compositionally biased region" description="Polar residues" evidence="3">
    <location>
        <begin position="68"/>
        <end position="99"/>
    </location>
</feature>
<feature type="compositionally biased region" description="Pro residues" evidence="3">
    <location>
        <begin position="124"/>
        <end position="142"/>
    </location>
</feature>
<feature type="compositionally biased region" description="Basic and acidic residues" evidence="3">
    <location>
        <begin position="259"/>
        <end position="271"/>
    </location>
</feature>
<proteinExistence type="inferred from homology"/>
<evidence type="ECO:0000250" key="1"/>
<evidence type="ECO:0000255" key="2"/>
<evidence type="ECO:0000256" key="3">
    <source>
        <dbReference type="SAM" id="MobiDB-lite"/>
    </source>
</evidence>
<evidence type="ECO:0000305" key="4"/>
<dbReference type="EMBL" id="KN275959">
    <property type="protein sequence ID" value="EEH46941.2"/>
    <property type="molecule type" value="Genomic_DNA"/>
</dbReference>
<dbReference type="RefSeq" id="XP_010758244.1">
    <property type="nucleotide sequence ID" value="XM_010759942.1"/>
</dbReference>
<dbReference type="SMR" id="C1G784"/>
<dbReference type="FunCoup" id="C1G784">
    <property type="interactions" value="166"/>
</dbReference>
<dbReference type="STRING" id="502780.C1G784"/>
<dbReference type="GeneID" id="22582411"/>
<dbReference type="KEGG" id="pbn:PADG_03039"/>
<dbReference type="VEuPathDB" id="FungiDB:PADG_03039"/>
<dbReference type="eggNOG" id="KOG1854">
    <property type="taxonomic scope" value="Eukaryota"/>
</dbReference>
<dbReference type="HOGENOM" id="CLU_008024_1_2_1"/>
<dbReference type="InParanoid" id="C1G784"/>
<dbReference type="OMA" id="RLDHQMQ"/>
<dbReference type="OrthoDB" id="39042at33183"/>
<dbReference type="Proteomes" id="UP000001628">
    <property type="component" value="Unassembled WGS sequence"/>
</dbReference>
<dbReference type="GO" id="GO:0061617">
    <property type="term" value="C:MICOS complex"/>
    <property type="evidence" value="ECO:0007669"/>
    <property type="project" value="TreeGrafter"/>
</dbReference>
<dbReference type="GO" id="GO:0042407">
    <property type="term" value="P:cristae formation"/>
    <property type="evidence" value="ECO:0007669"/>
    <property type="project" value="TreeGrafter"/>
</dbReference>
<dbReference type="InterPro" id="IPR019133">
    <property type="entry name" value="MIC60"/>
</dbReference>
<dbReference type="PANTHER" id="PTHR15415:SF7">
    <property type="entry name" value="MICOS COMPLEX SUBUNIT MIC60"/>
    <property type="match status" value="1"/>
</dbReference>
<dbReference type="PANTHER" id="PTHR15415">
    <property type="entry name" value="MITOFILIN"/>
    <property type="match status" value="1"/>
</dbReference>
<dbReference type="Pfam" id="PF09731">
    <property type="entry name" value="Mitofilin"/>
    <property type="match status" value="2"/>
</dbReference>
<name>MIC60_PARBD</name>